<accession>Q39K84</accession>
<evidence type="ECO:0000255" key="1">
    <source>
        <dbReference type="HAMAP-Rule" id="MF_01021"/>
    </source>
</evidence>
<feature type="chain" id="PRO_0000229816" description="Phosphoribosyl-AMP cyclohydrolase">
    <location>
        <begin position="1"/>
        <end position="138"/>
    </location>
</feature>
<feature type="binding site" evidence="1">
    <location>
        <position position="84"/>
    </location>
    <ligand>
        <name>Mg(2+)</name>
        <dbReference type="ChEBI" id="CHEBI:18420"/>
    </ligand>
</feature>
<feature type="binding site" evidence="1">
    <location>
        <position position="85"/>
    </location>
    <ligand>
        <name>Zn(2+)</name>
        <dbReference type="ChEBI" id="CHEBI:29105"/>
        <note>ligand shared between dimeric partners</note>
    </ligand>
</feature>
<feature type="binding site" evidence="1">
    <location>
        <position position="86"/>
    </location>
    <ligand>
        <name>Mg(2+)</name>
        <dbReference type="ChEBI" id="CHEBI:18420"/>
    </ligand>
</feature>
<feature type="binding site" evidence="1">
    <location>
        <position position="88"/>
    </location>
    <ligand>
        <name>Mg(2+)</name>
        <dbReference type="ChEBI" id="CHEBI:18420"/>
    </ligand>
</feature>
<feature type="binding site" evidence="1">
    <location>
        <position position="102"/>
    </location>
    <ligand>
        <name>Zn(2+)</name>
        <dbReference type="ChEBI" id="CHEBI:29105"/>
        <note>ligand shared between dimeric partners</note>
    </ligand>
</feature>
<feature type="binding site" evidence="1">
    <location>
        <position position="109"/>
    </location>
    <ligand>
        <name>Zn(2+)</name>
        <dbReference type="ChEBI" id="CHEBI:29105"/>
        <note>ligand shared between dimeric partners</note>
    </ligand>
</feature>
<protein>
    <recommendedName>
        <fullName evidence="1">Phosphoribosyl-AMP cyclohydrolase</fullName>
        <shortName evidence="1">PRA-CH</shortName>
        <ecNumber evidence="1">3.5.4.19</ecNumber>
    </recommendedName>
</protein>
<comment type="function">
    <text evidence="1">Catalyzes the hydrolysis of the adenine ring of phosphoribosyl-AMP.</text>
</comment>
<comment type="catalytic activity">
    <reaction evidence="1">
        <text>1-(5-phospho-beta-D-ribosyl)-5'-AMP + H2O = 1-(5-phospho-beta-D-ribosyl)-5-[(5-phospho-beta-D-ribosylamino)methylideneamino]imidazole-4-carboxamide</text>
        <dbReference type="Rhea" id="RHEA:20049"/>
        <dbReference type="ChEBI" id="CHEBI:15377"/>
        <dbReference type="ChEBI" id="CHEBI:58435"/>
        <dbReference type="ChEBI" id="CHEBI:59457"/>
        <dbReference type="EC" id="3.5.4.19"/>
    </reaction>
</comment>
<comment type="cofactor">
    <cofactor evidence="1">
        <name>Mg(2+)</name>
        <dbReference type="ChEBI" id="CHEBI:18420"/>
    </cofactor>
    <text evidence="1">Binds 1 Mg(2+) ion per subunit.</text>
</comment>
<comment type="cofactor">
    <cofactor evidence="1">
        <name>Zn(2+)</name>
        <dbReference type="ChEBI" id="CHEBI:29105"/>
    </cofactor>
    <text evidence="1">Binds 1 zinc ion per subunit.</text>
</comment>
<comment type="pathway">
    <text evidence="1">Amino-acid biosynthesis; L-histidine biosynthesis; L-histidine from 5-phospho-alpha-D-ribose 1-diphosphate: step 3/9.</text>
</comment>
<comment type="subunit">
    <text evidence="1">Homodimer.</text>
</comment>
<comment type="subcellular location">
    <subcellularLocation>
        <location evidence="1">Cytoplasm</location>
    </subcellularLocation>
</comment>
<comment type="similarity">
    <text evidence="1">Belongs to the PRA-CH family.</text>
</comment>
<proteinExistence type="inferred from homology"/>
<sequence length="138" mass="15900">MNTETNALPAWLDKVRWDDNGLVPVIAQEASTNDVLMFAWMNREALAKTIETQRAVYYSRSRKRLWFKGEESGHVQHVHEVRLDCDEDVVLLKVEQVSGIACHTGRHSCFFQKFEGTVDNGDWVAVEPVLKDPEHIYK</sequence>
<name>HIS3_BURL3</name>
<dbReference type="EC" id="3.5.4.19" evidence="1"/>
<dbReference type="EMBL" id="CP000151">
    <property type="protein sequence ID" value="ABB07132.1"/>
    <property type="molecule type" value="Genomic_DNA"/>
</dbReference>
<dbReference type="RefSeq" id="WP_011350733.1">
    <property type="nucleotide sequence ID" value="NZ_WNDV01000034.1"/>
</dbReference>
<dbReference type="SMR" id="Q39K84"/>
<dbReference type="GeneID" id="45093445"/>
<dbReference type="KEGG" id="bur:Bcep18194_A3530"/>
<dbReference type="PATRIC" id="fig|482957.22.peg.375"/>
<dbReference type="HOGENOM" id="CLU_048577_5_0_4"/>
<dbReference type="UniPathway" id="UPA00031">
    <property type="reaction ID" value="UER00008"/>
</dbReference>
<dbReference type="Proteomes" id="UP000002705">
    <property type="component" value="Chromosome 1"/>
</dbReference>
<dbReference type="GO" id="GO:0005737">
    <property type="term" value="C:cytoplasm"/>
    <property type="evidence" value="ECO:0007669"/>
    <property type="project" value="UniProtKB-SubCell"/>
</dbReference>
<dbReference type="GO" id="GO:0000287">
    <property type="term" value="F:magnesium ion binding"/>
    <property type="evidence" value="ECO:0007669"/>
    <property type="project" value="UniProtKB-UniRule"/>
</dbReference>
<dbReference type="GO" id="GO:0004635">
    <property type="term" value="F:phosphoribosyl-AMP cyclohydrolase activity"/>
    <property type="evidence" value="ECO:0007669"/>
    <property type="project" value="UniProtKB-UniRule"/>
</dbReference>
<dbReference type="GO" id="GO:0008270">
    <property type="term" value="F:zinc ion binding"/>
    <property type="evidence" value="ECO:0007669"/>
    <property type="project" value="UniProtKB-UniRule"/>
</dbReference>
<dbReference type="GO" id="GO:0000105">
    <property type="term" value="P:L-histidine biosynthetic process"/>
    <property type="evidence" value="ECO:0007669"/>
    <property type="project" value="UniProtKB-UniRule"/>
</dbReference>
<dbReference type="FunFam" id="3.10.20.810:FF:000001">
    <property type="entry name" value="Histidine biosynthesis bifunctional protein HisIE"/>
    <property type="match status" value="1"/>
</dbReference>
<dbReference type="Gene3D" id="3.10.20.810">
    <property type="entry name" value="Phosphoribosyl-AMP cyclohydrolase"/>
    <property type="match status" value="1"/>
</dbReference>
<dbReference type="HAMAP" id="MF_01021">
    <property type="entry name" value="HisI"/>
    <property type="match status" value="1"/>
</dbReference>
<dbReference type="InterPro" id="IPR026660">
    <property type="entry name" value="PRA-CH"/>
</dbReference>
<dbReference type="InterPro" id="IPR002496">
    <property type="entry name" value="PRib_AMP_CycHydrolase_dom"/>
</dbReference>
<dbReference type="InterPro" id="IPR038019">
    <property type="entry name" value="PRib_AMP_CycHydrolase_sf"/>
</dbReference>
<dbReference type="NCBIfam" id="NF000768">
    <property type="entry name" value="PRK00051.1"/>
    <property type="match status" value="1"/>
</dbReference>
<dbReference type="PANTHER" id="PTHR42945">
    <property type="entry name" value="HISTIDINE BIOSYNTHESIS BIFUNCTIONAL PROTEIN"/>
    <property type="match status" value="1"/>
</dbReference>
<dbReference type="PANTHER" id="PTHR42945:SF1">
    <property type="entry name" value="HISTIDINE BIOSYNTHESIS BIFUNCTIONAL PROTEIN HIS7"/>
    <property type="match status" value="1"/>
</dbReference>
<dbReference type="Pfam" id="PF01502">
    <property type="entry name" value="PRA-CH"/>
    <property type="match status" value="1"/>
</dbReference>
<dbReference type="SUPFAM" id="SSF141734">
    <property type="entry name" value="HisI-like"/>
    <property type="match status" value="1"/>
</dbReference>
<gene>
    <name evidence="1" type="primary">hisI</name>
    <name type="ordered locus">Bcep18194_A3530</name>
</gene>
<reference key="1">
    <citation type="submission" date="2005-10" db="EMBL/GenBank/DDBJ databases">
        <title>Complete sequence of chromosome 1 of Burkholderia sp. 383.</title>
        <authorList>
            <consortium name="US DOE Joint Genome Institute"/>
            <person name="Copeland A."/>
            <person name="Lucas S."/>
            <person name="Lapidus A."/>
            <person name="Barry K."/>
            <person name="Detter J.C."/>
            <person name="Glavina T."/>
            <person name="Hammon N."/>
            <person name="Israni S."/>
            <person name="Pitluck S."/>
            <person name="Chain P."/>
            <person name="Malfatti S."/>
            <person name="Shin M."/>
            <person name="Vergez L."/>
            <person name="Schmutz J."/>
            <person name="Larimer F."/>
            <person name="Land M."/>
            <person name="Kyrpides N."/>
            <person name="Lykidis A."/>
            <person name="Richardson P."/>
        </authorList>
    </citation>
    <scope>NUCLEOTIDE SEQUENCE [LARGE SCALE GENOMIC DNA]</scope>
    <source>
        <strain>ATCC 17760 / DSM 23089 / LMG 22485 / NCIMB 9086 / R18194 / 383</strain>
    </source>
</reference>
<keyword id="KW-0028">Amino-acid biosynthesis</keyword>
<keyword id="KW-0963">Cytoplasm</keyword>
<keyword id="KW-0368">Histidine biosynthesis</keyword>
<keyword id="KW-0378">Hydrolase</keyword>
<keyword id="KW-0460">Magnesium</keyword>
<keyword id="KW-0479">Metal-binding</keyword>
<keyword id="KW-0862">Zinc</keyword>
<organism>
    <name type="scientific">Burkholderia lata (strain ATCC 17760 / DSM 23089 / LMG 22485 / NCIMB 9086 / R18194 / 383)</name>
    <dbReference type="NCBI Taxonomy" id="482957"/>
    <lineage>
        <taxon>Bacteria</taxon>
        <taxon>Pseudomonadati</taxon>
        <taxon>Pseudomonadota</taxon>
        <taxon>Betaproteobacteria</taxon>
        <taxon>Burkholderiales</taxon>
        <taxon>Burkholderiaceae</taxon>
        <taxon>Burkholderia</taxon>
        <taxon>Burkholderia cepacia complex</taxon>
    </lineage>
</organism>